<sequence>MSESDLWLLPDGVEELLPPEATRIEELRRQLLDLYHSWGYEMIVPPLLEFLDSLLIGVGRDLELEMFKVTDQLTGRLMGIRADMTPQVARIDSRRSHDVASRFCYIGSVLRTKSPSMFSSRTPIQTGCELYGVVGSAADIEIISLMLETLNLAKISPLHMDIAHVGVYQAILAEAKLSKIQSEELFEALRRKAIPEVDEIAATIPDKAIRQKVMALPRLAGGKEKMKEARKIFAGNPDIEYALDEMSQVAAVIGERYPEVEIYFDFCEMRGYKYYTGLVFAAYTEGLGQAVAKGGRYDEVGRDFGRGRPAMGFSVDLKALYRMGKREWAQPAGAILAPNGQDAELWELIRQLRRSNRVIQLMPGEEAGHWASHCDRQIVRDESGQWIVKPLTEFNPNHVK</sequence>
<protein>
    <recommendedName>
        <fullName evidence="1">ATP phosphoribosyltransferase regulatory subunit</fullName>
    </recommendedName>
</protein>
<gene>
    <name evidence="1" type="primary">hisZ</name>
    <name type="ordered locus">HCH_05378</name>
</gene>
<reference key="1">
    <citation type="journal article" date="2005" name="Nucleic Acids Res.">
        <title>Genomic blueprint of Hahella chejuensis, a marine microbe producing an algicidal agent.</title>
        <authorList>
            <person name="Jeong H."/>
            <person name="Yim J.H."/>
            <person name="Lee C."/>
            <person name="Choi S.-H."/>
            <person name="Park Y.K."/>
            <person name="Yoon S.H."/>
            <person name="Hur C.-G."/>
            <person name="Kang H.-Y."/>
            <person name="Kim D."/>
            <person name="Lee H.H."/>
            <person name="Park K.H."/>
            <person name="Park S.-H."/>
            <person name="Park H.-S."/>
            <person name="Lee H.K."/>
            <person name="Oh T.K."/>
            <person name="Kim J.F."/>
        </authorList>
    </citation>
    <scope>NUCLEOTIDE SEQUENCE [LARGE SCALE GENOMIC DNA]</scope>
    <source>
        <strain>KCTC 2396</strain>
    </source>
</reference>
<keyword id="KW-0028">Amino-acid biosynthesis</keyword>
<keyword id="KW-0963">Cytoplasm</keyword>
<keyword id="KW-0368">Histidine biosynthesis</keyword>
<keyword id="KW-1185">Reference proteome</keyword>
<comment type="function">
    <text evidence="1">Required for the first step of histidine biosynthesis. May allow the feedback regulation of ATP phosphoribosyltransferase activity by histidine.</text>
</comment>
<comment type="pathway">
    <text evidence="1">Amino-acid biosynthesis; L-histidine biosynthesis; L-histidine from 5-phospho-alpha-D-ribose 1-diphosphate: step 1/9.</text>
</comment>
<comment type="subunit">
    <text evidence="1">Heteromultimer composed of HisG and HisZ subunits.</text>
</comment>
<comment type="subcellular location">
    <subcellularLocation>
        <location evidence="1">Cytoplasm</location>
    </subcellularLocation>
</comment>
<comment type="miscellaneous">
    <text>This function is generally fulfilled by the C-terminal part of HisG, which is missing in some bacteria such as this one.</text>
</comment>
<comment type="similarity">
    <text evidence="1">Belongs to the class-II aminoacyl-tRNA synthetase family. HisZ subfamily.</text>
</comment>
<comment type="sequence caution" evidence="2">
    <conflict type="erroneous initiation">
        <sequence resource="EMBL-CDS" id="ABC32047"/>
    </conflict>
</comment>
<dbReference type="EMBL" id="CP000155">
    <property type="protein sequence ID" value="ABC32047.1"/>
    <property type="status" value="ALT_INIT"/>
    <property type="molecule type" value="Genomic_DNA"/>
</dbReference>
<dbReference type="RefSeq" id="WP_041599905.1">
    <property type="nucleotide sequence ID" value="NC_007645.1"/>
</dbReference>
<dbReference type="SMR" id="Q2SBC7"/>
<dbReference type="STRING" id="349521.HCH_05378"/>
<dbReference type="KEGG" id="hch:HCH_05378"/>
<dbReference type="eggNOG" id="COG3705">
    <property type="taxonomic scope" value="Bacteria"/>
</dbReference>
<dbReference type="HOGENOM" id="CLU_025113_0_1_6"/>
<dbReference type="UniPathway" id="UPA00031">
    <property type="reaction ID" value="UER00006"/>
</dbReference>
<dbReference type="Proteomes" id="UP000000238">
    <property type="component" value="Chromosome"/>
</dbReference>
<dbReference type="GO" id="GO:0005737">
    <property type="term" value="C:cytoplasm"/>
    <property type="evidence" value="ECO:0007669"/>
    <property type="project" value="UniProtKB-SubCell"/>
</dbReference>
<dbReference type="GO" id="GO:0004821">
    <property type="term" value="F:histidine-tRNA ligase activity"/>
    <property type="evidence" value="ECO:0007669"/>
    <property type="project" value="TreeGrafter"/>
</dbReference>
<dbReference type="GO" id="GO:0006427">
    <property type="term" value="P:histidyl-tRNA aminoacylation"/>
    <property type="evidence" value="ECO:0007669"/>
    <property type="project" value="TreeGrafter"/>
</dbReference>
<dbReference type="GO" id="GO:0000105">
    <property type="term" value="P:L-histidine biosynthetic process"/>
    <property type="evidence" value="ECO:0007669"/>
    <property type="project" value="UniProtKB-UniRule"/>
</dbReference>
<dbReference type="CDD" id="cd00773">
    <property type="entry name" value="HisRS-like_core"/>
    <property type="match status" value="1"/>
</dbReference>
<dbReference type="Gene3D" id="3.30.930.10">
    <property type="entry name" value="Bira Bifunctional Protein, Domain 2"/>
    <property type="match status" value="1"/>
</dbReference>
<dbReference type="HAMAP" id="MF_00125">
    <property type="entry name" value="HisZ"/>
    <property type="match status" value="1"/>
</dbReference>
<dbReference type="InterPro" id="IPR045864">
    <property type="entry name" value="aa-tRNA-synth_II/BPL/LPL"/>
</dbReference>
<dbReference type="InterPro" id="IPR041715">
    <property type="entry name" value="HisRS-like_core"/>
</dbReference>
<dbReference type="InterPro" id="IPR004516">
    <property type="entry name" value="HisRS/HisZ"/>
</dbReference>
<dbReference type="InterPro" id="IPR004517">
    <property type="entry name" value="HisZ"/>
</dbReference>
<dbReference type="NCBIfam" id="TIGR00443">
    <property type="entry name" value="hisZ_biosyn_reg"/>
    <property type="match status" value="1"/>
</dbReference>
<dbReference type="NCBIfam" id="NF008935">
    <property type="entry name" value="PRK12292.1-1"/>
    <property type="match status" value="1"/>
</dbReference>
<dbReference type="NCBIfam" id="NF009086">
    <property type="entry name" value="PRK12421.1"/>
    <property type="match status" value="1"/>
</dbReference>
<dbReference type="PANTHER" id="PTHR43707:SF1">
    <property type="entry name" value="HISTIDINE--TRNA LIGASE, MITOCHONDRIAL-RELATED"/>
    <property type="match status" value="1"/>
</dbReference>
<dbReference type="PANTHER" id="PTHR43707">
    <property type="entry name" value="HISTIDYL-TRNA SYNTHETASE"/>
    <property type="match status" value="1"/>
</dbReference>
<dbReference type="Pfam" id="PF13393">
    <property type="entry name" value="tRNA-synt_His"/>
    <property type="match status" value="1"/>
</dbReference>
<dbReference type="PIRSF" id="PIRSF001549">
    <property type="entry name" value="His-tRNA_synth"/>
    <property type="match status" value="1"/>
</dbReference>
<dbReference type="SUPFAM" id="SSF55681">
    <property type="entry name" value="Class II aaRS and biotin synthetases"/>
    <property type="match status" value="1"/>
</dbReference>
<accession>Q2SBC7</accession>
<evidence type="ECO:0000255" key="1">
    <source>
        <dbReference type="HAMAP-Rule" id="MF_00125"/>
    </source>
</evidence>
<evidence type="ECO:0000305" key="2"/>
<proteinExistence type="inferred from homology"/>
<organism>
    <name type="scientific">Hahella chejuensis (strain KCTC 2396)</name>
    <dbReference type="NCBI Taxonomy" id="349521"/>
    <lineage>
        <taxon>Bacteria</taxon>
        <taxon>Pseudomonadati</taxon>
        <taxon>Pseudomonadota</taxon>
        <taxon>Gammaproteobacteria</taxon>
        <taxon>Oceanospirillales</taxon>
        <taxon>Hahellaceae</taxon>
        <taxon>Hahella</taxon>
    </lineage>
</organism>
<feature type="chain" id="PRO_0000242838" description="ATP phosphoribosyltransferase regulatory subunit">
    <location>
        <begin position="1"/>
        <end position="400"/>
    </location>
</feature>
<name>HISZ_HAHCH</name>